<protein>
    <recommendedName>
        <fullName evidence="1">Large ribosomal subunit protein uL30</fullName>
    </recommendedName>
    <alternativeName>
        <fullName evidence="2">50S ribosomal protein L30</fullName>
    </alternativeName>
</protein>
<keyword id="KW-0687">Ribonucleoprotein</keyword>
<keyword id="KW-0689">Ribosomal protein</keyword>
<sequence>MAINREILAKSDIKVEVELKRSLIGKLDSKVKTLKALGLKRIGDRKIHVLNKSLQGMLNSVISMVLLSEVKNG</sequence>
<proteinExistence type="inferred from homology"/>
<dbReference type="EMBL" id="CP000048">
    <property type="protein sequence ID" value="AAX17005.1"/>
    <property type="status" value="ALT_INIT"/>
    <property type="molecule type" value="Genomic_DNA"/>
</dbReference>
<dbReference type="SMR" id="B2S0J9"/>
<dbReference type="KEGG" id="bhr:BH0496"/>
<dbReference type="HOGENOM" id="CLU_177546_0_0_12"/>
<dbReference type="Proteomes" id="UP000008834">
    <property type="component" value="Chromosome"/>
</dbReference>
<dbReference type="GO" id="GO:0015934">
    <property type="term" value="C:large ribosomal subunit"/>
    <property type="evidence" value="ECO:0007669"/>
    <property type="project" value="InterPro"/>
</dbReference>
<dbReference type="GO" id="GO:0003735">
    <property type="term" value="F:structural constituent of ribosome"/>
    <property type="evidence" value="ECO:0007669"/>
    <property type="project" value="InterPro"/>
</dbReference>
<dbReference type="GO" id="GO:0006412">
    <property type="term" value="P:translation"/>
    <property type="evidence" value="ECO:0007669"/>
    <property type="project" value="UniProtKB-UniRule"/>
</dbReference>
<dbReference type="Gene3D" id="3.30.1390.20">
    <property type="entry name" value="Ribosomal protein L30, ferredoxin-like fold domain"/>
    <property type="match status" value="1"/>
</dbReference>
<dbReference type="HAMAP" id="MF_01371_B">
    <property type="entry name" value="Ribosomal_uL30_B"/>
    <property type="match status" value="1"/>
</dbReference>
<dbReference type="InterPro" id="IPR036919">
    <property type="entry name" value="Ribo_uL30_ferredoxin-like_sf"/>
</dbReference>
<dbReference type="InterPro" id="IPR005996">
    <property type="entry name" value="Ribosomal_uL30_bac-type"/>
</dbReference>
<dbReference type="InterPro" id="IPR016082">
    <property type="entry name" value="Ribosomal_uL30_ferredoxin-like"/>
</dbReference>
<dbReference type="NCBIfam" id="TIGR01308">
    <property type="entry name" value="rpmD_bact"/>
    <property type="match status" value="1"/>
</dbReference>
<dbReference type="Pfam" id="PF00327">
    <property type="entry name" value="Ribosomal_L30"/>
    <property type="match status" value="1"/>
</dbReference>
<dbReference type="SUPFAM" id="SSF55129">
    <property type="entry name" value="Ribosomal protein L30p/L7e"/>
    <property type="match status" value="1"/>
</dbReference>
<gene>
    <name evidence="1" type="primary">rpmD</name>
    <name type="ordered locus">BH0496</name>
</gene>
<feature type="chain" id="PRO_0000347079" description="Large ribosomal subunit protein uL30">
    <location>
        <begin position="1"/>
        <end position="73"/>
    </location>
</feature>
<evidence type="ECO:0000255" key="1">
    <source>
        <dbReference type="HAMAP-Rule" id="MF_01371"/>
    </source>
</evidence>
<evidence type="ECO:0000305" key="2"/>
<accession>B2S0J9</accession>
<reference key="1">
    <citation type="submission" date="2004-12" db="EMBL/GenBank/DDBJ databases">
        <title>The genome sequence of Borrelia hermsii and Borrelia turicatae: comparative analysis of two agents of endemic N. America relapsing fever.</title>
        <authorList>
            <person name="Porcella S.F."/>
            <person name="Raffel S.J."/>
            <person name="Schrumpf M.E."/>
            <person name="Montgomery B."/>
            <person name="Smith T."/>
            <person name="Schwan T.G."/>
        </authorList>
    </citation>
    <scope>NUCLEOTIDE SEQUENCE [LARGE SCALE GENOMIC DNA]</scope>
    <source>
        <strain>HS1 / DAH</strain>
    </source>
</reference>
<comment type="subunit">
    <text evidence="1">Part of the 50S ribosomal subunit.</text>
</comment>
<comment type="similarity">
    <text evidence="1">Belongs to the universal ribosomal protein uL30 family.</text>
</comment>
<comment type="sequence caution" evidence="2">
    <conflict type="erroneous initiation">
        <sequence resource="EMBL-CDS" id="AAX17005"/>
    </conflict>
</comment>
<organism>
    <name type="scientific">Borrelia hermsii (strain HS1 / DAH)</name>
    <dbReference type="NCBI Taxonomy" id="314723"/>
    <lineage>
        <taxon>Bacteria</taxon>
        <taxon>Pseudomonadati</taxon>
        <taxon>Spirochaetota</taxon>
        <taxon>Spirochaetia</taxon>
        <taxon>Spirochaetales</taxon>
        <taxon>Borreliaceae</taxon>
        <taxon>Borrelia</taxon>
    </lineage>
</organism>
<name>RL30_BORHD</name>